<name>GL_EBVB9</name>
<comment type="function">
    <text evidence="2 3 6 7">The heterodimer glycoprotein H-glycoprotein L is required for the fusion of viral and plasma membranes leading to virus entry into the host cell. Acts as a functional inhibitor of gH and maintains gH in an inhibited form. Upon binding to host integrins, gL dissociates from gH leading to activation of the viral fusion glycoproteins gB and gH. Fusion of EBV with B-lymphocytes requires the additional receptor-binding protein gp42, which forms a complex with gH/gL. The heterodimer gH/gL targets also host EPHA2 to promote viral entry.</text>
</comment>
<comment type="subunit">
    <text evidence="2 6 7 9">Interacts with glycoprotein H (gH); this interaction is necessary for the correct processing and cell surface expression of gH. The heterodimer gH/gL seems to interact with gB trimers during fusion. The heterodimer gH/gL interacts with host EPHA2 to facilitate virus internalization and fusion.</text>
</comment>
<comment type="interaction">
    <interactant intactId="EBI-15897767">
        <id>P03212</id>
    </interactant>
    <interactant intactId="EBI-15815779">
        <id>P03231</id>
        <label>gH</label>
    </interactant>
    <organismsDiffer>false</organismsDiffer>
    <experiments>3</experiments>
</comment>
<comment type="subcellular location">
    <subcellularLocation>
        <location evidence="2">Virion membrane</location>
        <topology evidence="2">Peripheral membrane protein</topology>
        <orientation evidence="2">Extracellular side</orientation>
    </subcellularLocation>
    <subcellularLocation>
        <location evidence="1 2 4 8">Host cell membrane</location>
        <topology evidence="2">Peripheral membrane protein</topology>
        <orientation evidence="2">Extracellular side</orientation>
    </subcellularLocation>
    <subcellularLocation>
        <location evidence="2">Host Golgi apparatus</location>
        <location evidence="2">Host trans-Golgi network</location>
    </subcellularLocation>
    <text evidence="2">gL associates with the extravirion surface through its binding to gH. During virion morphogenesis, this protein probably accumulates in the host trans-Golgi where secondary envelopment occurs.</text>
</comment>
<comment type="similarity">
    <text evidence="2">Belongs to the herpesviridae glycoprotein L family.</text>
</comment>
<reference key="1">
    <citation type="journal article" date="1984" name="Nature">
        <title>DNA sequence and expression of the B95-8 Epstein-Barr virus genome.</title>
        <authorList>
            <person name="Baer R."/>
            <person name="Bankier A.T."/>
            <person name="Biggin M.D."/>
            <person name="Deininger P.L."/>
            <person name="Farrell P.J."/>
            <person name="Gibson T.J."/>
            <person name="Hatfull G."/>
            <person name="Hudson G.S."/>
            <person name="Satchwell S.C."/>
            <person name="Seguin C."/>
            <person name="Tuffnell P.S."/>
            <person name="Barrell B.G."/>
        </authorList>
    </citation>
    <scope>NUCLEOTIDE SEQUENCE [LARGE SCALE GENOMIC DNA]</scope>
</reference>
<reference key="2">
    <citation type="journal article" date="2003" name="Virology">
        <title>Updated Epstein-Barr virus (EBV) DNA sequence and analysis of a promoter for the BART (CST, BARF0) RNAs of EBV.</title>
        <authorList>
            <person name="de Jesus O."/>
            <person name="Smith P.R."/>
            <person name="Spender L.C."/>
            <person name="Elgueta Karstegl C."/>
            <person name="Niller H.H."/>
            <person name="Huang D."/>
            <person name="Farrell P.J."/>
        </authorList>
    </citation>
    <scope>GENOME REANNOTATION</scope>
</reference>
<reference key="3">
    <citation type="journal article" date="1995" name="J. Virol.">
        <title>The Epstein-Barr virus (EBV) BZLF2 gene product associates with the gH and gL homologs of EBV and carries an epitope critical to infection of B cells but not of epithelial cells.</title>
        <authorList>
            <person name="Li Q."/>
            <person name="Turk S.M."/>
            <person name="Hutt-Fletcher L.M."/>
        </authorList>
    </citation>
    <scope>SUBCELLULAR LOCATION</scope>
</reference>
<reference key="4">
    <citation type="journal article" date="1998" name="J. Virol.">
        <title>Epstein-Barr virus uses different complexes of glycoproteins gH and gL to infect B lymphocytes and epithelial cells.</title>
        <authorList>
            <person name="Wang X."/>
            <person name="Kenyon W.J."/>
            <person name="Li Q."/>
            <person name="Mullberg J."/>
            <person name="Hutt-Fletcher L.M."/>
        </authorList>
    </citation>
    <scope>INTERACTION WITH GH AND GP42</scope>
</reference>
<reference key="5">
    <citation type="journal article" date="2001" name="J. Gen. Virol.">
        <title>Roles of Epstein-Barr virus glycoproteins gp350 and gp25 in the infection of human epithelial cells.</title>
        <authorList>
            <person name="Maruo S."/>
            <person name="Yang L."/>
            <person name="Takada K."/>
        </authorList>
    </citation>
    <scope>FUNCTION</scope>
</reference>
<reference key="6">
    <citation type="journal article" date="2004" name="Proc. Natl. Acad. Sci. U.S.A.">
        <title>Proteins of purified Epstein-Barr virus.</title>
        <authorList>
            <person name="Johannsen E."/>
            <person name="Luftig M."/>
            <person name="Chase M.R."/>
            <person name="Weicksel S."/>
            <person name="Cahir-McFarland E."/>
            <person name="Illanes D."/>
            <person name="Sarracino D."/>
            <person name="Kieff E."/>
        </authorList>
    </citation>
    <scope>SUBCELLULAR LOCATION</scope>
</reference>
<reference key="7">
    <citation type="journal article" date="2018" name="Nat. Microbiol.">
        <title>Ephrin receptor A2 is an epithelial cell receptor for Epstein-Barr virus entry.</title>
        <authorList>
            <person name="Zhang H."/>
            <person name="Li Y."/>
            <person name="Wang H.B."/>
            <person name="Zhang A."/>
            <person name="Chen M.L."/>
            <person name="Fang Z.X."/>
            <person name="Dong X.D."/>
            <person name="Li S.B."/>
            <person name="Du Y."/>
            <person name="Xiong D."/>
            <person name="He J.Y."/>
            <person name="Li M.Z."/>
            <person name="Liu Y.M."/>
            <person name="Zhou A.J."/>
            <person name="Zhong Q."/>
            <person name="Zeng Y.X."/>
            <person name="Kieff E."/>
            <person name="Zhang Z."/>
            <person name="Gewurz B.E."/>
            <person name="Zhao B."/>
            <person name="Zeng M.S."/>
        </authorList>
    </citation>
    <scope>FUNCTION</scope>
    <scope>INTERACTION WITH HOST EPHA2</scope>
</reference>
<reference key="8">
    <citation type="journal article" date="2018" name="Nat. Microbiol.">
        <title>Ephrin receptor A2 is a functional entry receptor for Epstein-Barr virus.</title>
        <authorList>
            <person name="Chen J."/>
            <person name="Sathiyamoorthy K."/>
            <person name="Zhang X."/>
            <person name="Schaller S."/>
            <person name="Perez White B.E."/>
            <person name="Jardetzky T.S."/>
            <person name="Longnecker R."/>
        </authorList>
    </citation>
    <scope>FUNCTION</scope>
    <scope>INTERACTION WITH HOST EPHA2</scope>
</reference>
<reference key="9">
    <citation type="journal article" date="2010" name="Proc. Natl. Acad. Sci. U.S.A.">
        <title>Crystal structure of the Epstein-Barr virus (EBV) glycoprotein H/glycoprotein L (gH/gL) complex.</title>
        <authorList>
            <person name="Matsuura H."/>
            <person name="Kirschner A.N."/>
            <person name="Longnecker R."/>
            <person name="Jardetzky T.S."/>
        </authorList>
    </citation>
    <scope>X-RAY CRYSTALLOGRAPHY (3.58 ANGSTROMS) OF 24-131</scope>
    <scope>DISULFIDE BOND</scope>
</reference>
<reference key="10">
    <citation type="journal article" date="2016" name="Nat. Commun.">
        <title>Structural basis for Epstein-Barr virus host cell tropism mediated by gp42 and gHgL entry glycoproteins.</title>
        <authorList>
            <person name="Sathiyamoorthy K."/>
            <person name="Hu Y.X."/>
            <person name="Moehl B.S."/>
            <person name="Chen J."/>
            <person name="Longnecker R."/>
            <person name="Jardetzky T.S."/>
        </authorList>
    </citation>
    <scope>X-RAY CRYSTALLOGRAPHY (3.10 ANGSTROMS) OF 24-135</scope>
</reference>
<reference key="11">
    <citation type="journal article" date="2017" name="Proc. Natl. Acad. Sci. U.S.A.">
        <title>Inhibition of EBV-mediated membrane fusion by anti-gHgL antibodies.</title>
        <authorList>
            <person name="Sathiyamoorthy K."/>
            <person name="Jiang J."/>
            <person name="Moehl B.S."/>
            <person name="Chen J."/>
            <person name="Zhou Z.H."/>
            <person name="Longnecker R."/>
            <person name="Jardetzky T.S."/>
        </authorList>
    </citation>
    <scope>X-RAY CRYSTALLOGRAPHY (3.10 ANGSTROMS) OF 24-137</scope>
</reference>
<protein>
    <recommendedName>
        <fullName evidence="2">Envelope glycoprotein L</fullName>
        <shortName evidence="2">gL</shortName>
    </recommendedName>
</protein>
<accession>P03212</accession>
<accession>Q777E0</accession>
<feature type="signal peptide" evidence="2">
    <location>
        <begin position="1"/>
        <end position="22"/>
    </location>
</feature>
<feature type="chain" id="PRO_0000038273" description="Envelope glycoprotein L" evidence="2">
    <location>
        <begin position="23"/>
        <end position="137"/>
    </location>
</feature>
<feature type="region of interest" description="Interaction with gH" evidence="2">
    <location>
        <begin position="23"/>
        <end position="128"/>
    </location>
</feature>
<feature type="disulfide bond" evidence="5">
    <location>
        <begin position="28"/>
        <end position="56"/>
    </location>
</feature>
<feature type="disulfide bond" evidence="5">
    <location>
        <begin position="29"/>
        <end position="79"/>
    </location>
</feature>
<feature type="turn" evidence="11">
    <location>
        <begin position="41"/>
        <end position="43"/>
    </location>
</feature>
<feature type="strand" evidence="11">
    <location>
        <begin position="47"/>
        <end position="50"/>
    </location>
</feature>
<feature type="turn" evidence="11">
    <location>
        <begin position="53"/>
        <end position="58"/>
    </location>
</feature>
<feature type="strand" evidence="11">
    <location>
        <begin position="61"/>
        <end position="65"/>
    </location>
</feature>
<feature type="turn" evidence="11">
    <location>
        <begin position="70"/>
        <end position="73"/>
    </location>
</feature>
<feature type="strand" evidence="11">
    <location>
        <begin position="74"/>
        <end position="81"/>
    </location>
</feature>
<feature type="helix" evidence="11">
    <location>
        <begin position="82"/>
        <end position="95"/>
    </location>
</feature>
<feature type="turn" evidence="11">
    <location>
        <begin position="96"/>
        <end position="99"/>
    </location>
</feature>
<feature type="helix" evidence="11">
    <location>
        <begin position="102"/>
        <end position="117"/>
    </location>
</feature>
<feature type="strand" evidence="10">
    <location>
        <begin position="120"/>
        <end position="122"/>
    </location>
</feature>
<feature type="strand" evidence="11">
    <location>
        <begin position="123"/>
        <end position="126"/>
    </location>
</feature>
<feature type="turn" evidence="10">
    <location>
        <begin position="128"/>
        <end position="131"/>
    </location>
</feature>
<keyword id="KW-0002">3D-structure</keyword>
<keyword id="KW-1015">Disulfide bond</keyword>
<keyword id="KW-1169">Fusion of virus membrane with host cell membrane</keyword>
<keyword id="KW-1168">Fusion of virus membrane with host membrane</keyword>
<keyword id="KW-0325">Glycoprotein</keyword>
<keyword id="KW-1032">Host cell membrane</keyword>
<keyword id="KW-1040">Host Golgi apparatus</keyword>
<keyword id="KW-1043">Host membrane</keyword>
<keyword id="KW-0472">Membrane</keyword>
<keyword id="KW-1185">Reference proteome</keyword>
<keyword id="KW-0732">Signal</keyword>
<keyword id="KW-0261">Viral envelope protein</keyword>
<keyword id="KW-1162">Viral penetration into host cytoplasm</keyword>
<keyword id="KW-0946">Virion</keyword>
<keyword id="KW-1160">Virus entry into host cell</keyword>
<evidence type="ECO:0000250" key="1"/>
<evidence type="ECO:0000255" key="2">
    <source>
        <dbReference type="HAMAP-Rule" id="MF_04034"/>
    </source>
</evidence>
<evidence type="ECO:0000269" key="3">
    <source>
    </source>
</evidence>
<evidence type="ECO:0000269" key="4">
    <source>
    </source>
</evidence>
<evidence type="ECO:0000269" key="5">
    <source>
    </source>
</evidence>
<evidence type="ECO:0000269" key="6">
    <source>
    </source>
</evidence>
<evidence type="ECO:0000269" key="7">
    <source>
    </source>
</evidence>
<evidence type="ECO:0000269" key="8">
    <source>
    </source>
</evidence>
<evidence type="ECO:0000269" key="9">
    <source>
    </source>
</evidence>
<evidence type="ECO:0007829" key="10">
    <source>
        <dbReference type="PDB" id="5T1D"/>
    </source>
</evidence>
<evidence type="ECO:0007829" key="11">
    <source>
        <dbReference type="PDB" id="7CZE"/>
    </source>
</evidence>
<organismHost>
    <name type="scientific">Homo sapiens</name>
    <name type="common">Human</name>
    <dbReference type="NCBI Taxonomy" id="9606"/>
</organismHost>
<sequence>MRAVGVFLAICLVTIFVLPTWGNWAYPCCHVTQLRAQHLLALENISDIYLVSNQTCDGFSLASLNSPKNGSNQLVISRCANGLNVVSFFISILKRSSSALTGHLRELLTTLETLYGSFSVEDLFGANLNRYAWHRGG</sequence>
<gene>
    <name evidence="2" type="primary">gL</name>
    <name type="ORF">BKRF2</name>
</gene>
<dbReference type="EMBL" id="V01555">
    <property type="protein sequence ID" value="CAA24817.1"/>
    <property type="molecule type" value="Genomic_DNA"/>
</dbReference>
<dbReference type="EMBL" id="AJ507799">
    <property type="protein sequence ID" value="CAD53428.1"/>
    <property type="molecule type" value="Genomic_DNA"/>
</dbReference>
<dbReference type="PIR" id="D43043">
    <property type="entry name" value="QQBE32"/>
</dbReference>
<dbReference type="RefSeq" id="YP_401678.1">
    <property type="nucleotide sequence ID" value="NC_007605.1"/>
</dbReference>
<dbReference type="PDB" id="3PHF">
    <property type="method" value="X-ray"/>
    <property type="resolution" value="3.58 A"/>
    <property type="chains" value="2/4/6/B/D/F/H/J/L/N/P/R/T/V/X/Z=24-131"/>
</dbReference>
<dbReference type="PDB" id="5T1D">
    <property type="method" value="X-ray"/>
    <property type="resolution" value="3.10 A"/>
    <property type="chains" value="B=24-135"/>
</dbReference>
<dbReference type="PDB" id="5W0K">
    <property type="method" value="X-ray"/>
    <property type="resolution" value="3.10 A"/>
    <property type="chains" value="B/D=24-137"/>
</dbReference>
<dbReference type="PDB" id="7CZE">
    <property type="method" value="X-ray"/>
    <property type="resolution" value="3.00 A"/>
    <property type="chains" value="B/D/F/H=24-132"/>
</dbReference>
<dbReference type="PDB" id="7S07">
    <property type="method" value="X-ray"/>
    <property type="resolution" value="3.29 A"/>
    <property type="chains" value="B=27-124"/>
</dbReference>
<dbReference type="PDB" id="7S1B">
    <property type="method" value="X-ray"/>
    <property type="resolution" value="3.03 A"/>
    <property type="chains" value="B=24-137"/>
</dbReference>
<dbReference type="PDB" id="7YP1">
    <property type="method" value="EM"/>
    <property type="resolution" value="3.54 A"/>
    <property type="chains" value="B=40-127"/>
</dbReference>
<dbReference type="PDB" id="8TNN">
    <property type="method" value="X-ray"/>
    <property type="resolution" value="3.36 A"/>
    <property type="chains" value="B/E=24-135"/>
</dbReference>
<dbReference type="PDB" id="8TNT">
    <property type="method" value="X-ray"/>
    <property type="resolution" value="3.15 A"/>
    <property type="chains" value="B=24-135"/>
</dbReference>
<dbReference type="PDBsum" id="3PHF"/>
<dbReference type="PDBsum" id="5T1D"/>
<dbReference type="PDBsum" id="5W0K"/>
<dbReference type="PDBsum" id="7CZE"/>
<dbReference type="PDBsum" id="7S07"/>
<dbReference type="PDBsum" id="7S1B"/>
<dbReference type="PDBsum" id="7YP1"/>
<dbReference type="PDBsum" id="8TNN"/>
<dbReference type="PDBsum" id="8TNT"/>
<dbReference type="SMR" id="P03212"/>
<dbReference type="DIP" id="DIP-47676N"/>
<dbReference type="IntAct" id="P03212">
    <property type="interactions" value="1"/>
</dbReference>
<dbReference type="ABCD" id="P03212">
    <property type="antibodies" value="2 sequenced antibodies"/>
</dbReference>
<dbReference type="DNASU" id="3783710"/>
<dbReference type="GeneID" id="3783710"/>
<dbReference type="KEGG" id="vg:3783710"/>
<dbReference type="SIGNOR" id="P03212"/>
<dbReference type="EvolutionaryTrace" id="P03212"/>
<dbReference type="Proteomes" id="UP000153037">
    <property type="component" value="Segment"/>
</dbReference>
<dbReference type="GO" id="GO:0044177">
    <property type="term" value="C:host cell Golgi apparatus"/>
    <property type="evidence" value="ECO:0007669"/>
    <property type="project" value="UniProtKB-SubCell"/>
</dbReference>
<dbReference type="GO" id="GO:0020002">
    <property type="term" value="C:host cell plasma membrane"/>
    <property type="evidence" value="ECO:0007669"/>
    <property type="project" value="UniProtKB-SubCell"/>
</dbReference>
<dbReference type="GO" id="GO:0016020">
    <property type="term" value="C:membrane"/>
    <property type="evidence" value="ECO:0007669"/>
    <property type="project" value="UniProtKB-KW"/>
</dbReference>
<dbReference type="GO" id="GO:0019031">
    <property type="term" value="C:viral envelope"/>
    <property type="evidence" value="ECO:0007669"/>
    <property type="project" value="UniProtKB-KW"/>
</dbReference>
<dbReference type="GO" id="GO:0055036">
    <property type="term" value="C:virion membrane"/>
    <property type="evidence" value="ECO:0007669"/>
    <property type="project" value="UniProtKB-SubCell"/>
</dbReference>
<dbReference type="GO" id="GO:0019064">
    <property type="term" value="P:fusion of virus membrane with host plasma membrane"/>
    <property type="evidence" value="ECO:0007669"/>
    <property type="project" value="UniProtKB-KW"/>
</dbReference>
<dbReference type="GO" id="GO:0046718">
    <property type="term" value="P:symbiont entry into host cell"/>
    <property type="evidence" value="ECO:0007669"/>
    <property type="project" value="UniProtKB-KW"/>
</dbReference>
<dbReference type="Gene3D" id="3.10.390.20">
    <property type="entry name" value="Viral glycoprotein L"/>
    <property type="match status" value="1"/>
</dbReference>
<dbReference type="HAMAP" id="MF_04034">
    <property type="entry name" value="HSV_GL_alphagamma"/>
    <property type="match status" value="1"/>
</dbReference>
<dbReference type="InterPro" id="IPR020175">
    <property type="entry name" value="Herpes_gL_rhadinovirus"/>
</dbReference>
<dbReference type="InterPro" id="IPR038313">
    <property type="entry name" value="Herpes_gL_rhadinovirus_sf"/>
</dbReference>
<dbReference type="InterPro" id="IPR034708">
    <property type="entry name" value="HSV_GL_alphagamma"/>
</dbReference>
<dbReference type="Pfam" id="PF11108">
    <property type="entry name" value="Phage_glycop_gL"/>
    <property type="match status" value="1"/>
</dbReference>
<organism>
    <name type="scientific">Epstein-Barr virus (strain B95-8)</name>
    <name type="common">HHV-4</name>
    <name type="synonym">Human herpesvirus 4</name>
    <dbReference type="NCBI Taxonomy" id="10377"/>
    <lineage>
        <taxon>Viruses</taxon>
        <taxon>Duplodnaviria</taxon>
        <taxon>Heunggongvirae</taxon>
        <taxon>Peploviricota</taxon>
        <taxon>Herviviricetes</taxon>
        <taxon>Herpesvirales</taxon>
        <taxon>Orthoherpesviridae</taxon>
        <taxon>Gammaherpesvirinae</taxon>
        <taxon>Lymphocryptovirus</taxon>
        <taxon>Lymphocryptovirus humangamma4</taxon>
        <taxon>Epstein-Barr virus (strain GD1)</taxon>
    </lineage>
</organism>
<proteinExistence type="evidence at protein level"/>